<organism>
    <name type="scientific">Bacillus subtilis (strain 168)</name>
    <dbReference type="NCBI Taxonomy" id="224308"/>
    <lineage>
        <taxon>Bacteria</taxon>
        <taxon>Bacillati</taxon>
        <taxon>Bacillota</taxon>
        <taxon>Bacilli</taxon>
        <taxon>Bacillales</taxon>
        <taxon>Bacillaceae</taxon>
        <taxon>Bacillus</taxon>
    </lineage>
</organism>
<gene>
    <name evidence="8" type="primary">gmuG</name>
    <name evidence="8" type="synonym">ydhT</name>
    <name type="ordered locus">BSU05880</name>
</gene>
<accession>O05512</accession>
<accession>Q797D6</accession>
<sequence>MFKKHTISLLIIFLLASAVLAKPIEAHTVSPVNPNAQQTTKTVMNWLAHLPNRTENRVLSGAFGGYSHDTFSMAEADRIRSATGQSPAIYGCDYARGWLETANIEDSIDVSCNGDLMSYWKNGGIPQISLHLANPAFQSGHFKTPITNDQYKKILDSSTVEGKRLNAMLSKIADGLQELENQGVPVLFRPLHEMNGEWFWWGLTSYNQKDNERISLYKQLYKKIYHYMTDTRGLDHLIWVYSPDANRDFKTDFYPGASYVDIVGLDAYFQDAYSINGYDQLTALNKPFAFTEVGPQTANGSFDYSLFINAIKQKYPKTIYFLAWNDEWSAAVNKGASALYHDSWTLNKGEIWNGDSLTPIVE</sequence>
<feature type="signal peptide" evidence="3">
    <location>
        <begin position="1"/>
        <end position="26"/>
    </location>
</feature>
<feature type="chain" id="PRO_0000360866" description="Mannan endo-1,4-beta-mannosidase">
    <location>
        <begin position="27"/>
        <end position="362"/>
    </location>
</feature>
<feature type="domain" description="GH26" evidence="2">
    <location>
        <begin position="38"/>
        <end position="349"/>
    </location>
</feature>
<feature type="active site" description="Proton donor" evidence="1">
    <location>
        <position position="193"/>
    </location>
</feature>
<feature type="active site" description="Nucleophile" evidence="1">
    <location>
        <position position="292"/>
    </location>
</feature>
<feature type="binding site" evidence="1">
    <location>
        <position position="131"/>
    </location>
    <ligand>
        <name>substrate</name>
    </ligand>
</feature>
<feature type="binding site" evidence="1">
    <location>
        <position position="198"/>
    </location>
    <ligand>
        <name>substrate</name>
    </ligand>
</feature>
<feature type="binding site" evidence="1">
    <location>
        <position position="268"/>
    </location>
    <ligand>
        <name>substrate</name>
    </ligand>
</feature>
<feature type="binding site" evidence="1">
    <location>
        <begin position="324"/>
        <end position="325"/>
    </location>
    <ligand>
        <name>substrate</name>
    </ligand>
</feature>
<feature type="site" description="Plays an important role in maintaining the position of the catalytic nucleophile" evidence="1">
    <location>
        <position position="192"/>
    </location>
</feature>
<feature type="sequence conflict" description="In Ref. 1; BAA19712." evidence="9" ref="1">
    <original>K</original>
    <variation>N</variation>
    <location>
        <position position="153"/>
    </location>
</feature>
<feature type="sequence conflict" description="In Ref. 1; BAA19712." evidence="9" ref="1">
    <original>STV</original>
    <variation>ATA</variation>
    <location>
        <begin position="158"/>
        <end position="160"/>
    </location>
</feature>
<feature type="helix" evidence="12">
    <location>
        <begin position="38"/>
        <end position="49"/>
    </location>
</feature>
<feature type="helix" evidence="12">
    <location>
        <begin position="50"/>
        <end position="52"/>
    </location>
</feature>
<feature type="strand" evidence="12">
    <location>
        <begin position="53"/>
        <end position="56"/>
    </location>
</feature>
<feature type="strand" evidence="12">
    <location>
        <begin position="61"/>
        <end position="66"/>
    </location>
</feature>
<feature type="turn" evidence="12">
    <location>
        <begin position="67"/>
        <end position="70"/>
    </location>
</feature>
<feature type="helix" evidence="12">
    <location>
        <begin position="74"/>
        <end position="83"/>
    </location>
</feature>
<feature type="strand" evidence="12">
    <location>
        <begin position="88"/>
        <end position="96"/>
    </location>
</feature>
<feature type="helix" evidence="12">
    <location>
        <begin position="104"/>
        <end position="107"/>
    </location>
</feature>
<feature type="helix" evidence="12">
    <location>
        <begin position="113"/>
        <end position="121"/>
    </location>
</feature>
<feature type="strand" evidence="12">
    <location>
        <begin position="125"/>
        <end position="131"/>
    </location>
</feature>
<feature type="strand" evidence="12">
    <location>
        <begin position="137"/>
        <end position="139"/>
    </location>
</feature>
<feature type="helix" evidence="12">
    <location>
        <begin position="148"/>
        <end position="155"/>
    </location>
</feature>
<feature type="helix" evidence="12">
    <location>
        <begin position="160"/>
        <end position="180"/>
    </location>
</feature>
<feature type="turn" evidence="12">
    <location>
        <begin position="181"/>
        <end position="183"/>
    </location>
</feature>
<feature type="strand" evidence="12">
    <location>
        <begin position="186"/>
        <end position="189"/>
    </location>
</feature>
<feature type="strand" evidence="12">
    <location>
        <begin position="196"/>
        <end position="199"/>
    </location>
</feature>
<feature type="helix" evidence="12">
    <location>
        <begin position="211"/>
        <end position="229"/>
    </location>
</feature>
<feature type="strand" evidence="12">
    <location>
        <begin position="236"/>
        <end position="241"/>
    </location>
</feature>
<feature type="turn" evidence="12">
    <location>
        <begin position="250"/>
        <end position="253"/>
    </location>
</feature>
<feature type="turn" evidence="11">
    <location>
        <begin position="257"/>
        <end position="259"/>
    </location>
</feature>
<feature type="strand" evidence="12">
    <location>
        <begin position="261"/>
        <end position="270"/>
    </location>
</feature>
<feature type="helix" evidence="11">
    <location>
        <begin position="272"/>
        <end position="274"/>
    </location>
</feature>
<feature type="helix" evidence="12">
    <location>
        <begin position="278"/>
        <end position="282"/>
    </location>
</feature>
<feature type="strand" evidence="12">
    <location>
        <begin position="288"/>
        <end position="297"/>
    </location>
</feature>
<feature type="helix" evidence="12">
    <location>
        <begin position="304"/>
        <end position="314"/>
    </location>
</feature>
<feature type="strand" evidence="12">
    <location>
        <begin position="318"/>
        <end position="323"/>
    </location>
</feature>
<feature type="helix" evidence="12">
    <location>
        <begin position="326"/>
        <end position="328"/>
    </location>
</feature>
<feature type="helix" evidence="12">
    <location>
        <begin position="330"/>
        <end position="332"/>
    </location>
</feature>
<feature type="helix" evidence="12">
    <location>
        <begin position="336"/>
        <end position="341"/>
    </location>
</feature>
<feature type="strand" evidence="12">
    <location>
        <begin position="351"/>
        <end position="353"/>
    </location>
</feature>
<name>MANB_BACSU</name>
<keyword id="KW-0002">3D-structure</keyword>
<keyword id="KW-0119">Carbohydrate metabolism</keyword>
<keyword id="KW-0903">Direct protein sequencing</keyword>
<keyword id="KW-0326">Glycosidase</keyword>
<keyword id="KW-0378">Hydrolase</keyword>
<keyword id="KW-0624">Polysaccharide degradation</keyword>
<keyword id="KW-1185">Reference proteome</keyword>
<keyword id="KW-0964">Secreted</keyword>
<keyword id="KW-0732">Signal</keyword>
<comment type="function">
    <text evidence="4 5">Involved in the degradation of glucomannan. Catalyzes the endo hydrolysis of beta-1,4-linked mannan, galactomannan and glucomannan.</text>
</comment>
<comment type="catalytic activity">
    <reaction evidence="5">
        <text>Random hydrolysis of (1-&gt;4)-beta-D-mannosidic linkages in mannans, galactomannans and glucomannans.</text>
        <dbReference type="EC" id="3.2.1.78"/>
    </reaction>
</comment>
<comment type="biophysicochemical properties">
    <kinetics>
        <KM evidence="5">2.7 mg/ml for glucomannan</KM>
        <KM evidence="5">4.5 mg/ml for galactomannan</KM>
        <text evidence="5">kcat is 330 min(-1) for mannanase activity with galactomannan as substrate. kcat is 350 min(-1) for mannanase activity with glucomannan as substrate.</text>
    </kinetics>
</comment>
<comment type="subunit">
    <text evidence="6">Homodimer.</text>
</comment>
<comment type="subcellular location">
    <subcellularLocation>
        <location evidence="10">Secreted</location>
    </subcellularLocation>
</comment>
<comment type="induction">
    <text evidence="4">Up-regulated by konjac glucomannan and by cellobiose and mannobiose, the possible degradation products of glucomannan. Repressed by glucose via the carbon catabolite repression system. Also repressed by GmuR.</text>
</comment>
<comment type="similarity">
    <text evidence="2 9">Belongs to the glycosyl hydrolase 26 family.</text>
</comment>
<protein>
    <recommendedName>
        <fullName evidence="7">Mannan endo-1,4-beta-mannosidase</fullName>
        <ecNumber evidence="5">3.2.1.78</ecNumber>
    </recommendedName>
    <alternativeName>
        <fullName evidence="7">1,4-beta-D-mannan mannanohydrolase</fullName>
    </alternativeName>
    <alternativeName>
        <fullName evidence="7">Beta-mannanase</fullName>
    </alternativeName>
    <alternativeName>
        <fullName evidence="7">Glucomannan utilization protein G</fullName>
    </alternativeName>
</protein>
<evidence type="ECO:0000250" key="1">
    <source>
        <dbReference type="UniProtKB" id="P49424"/>
    </source>
</evidence>
<evidence type="ECO:0000255" key="2">
    <source>
        <dbReference type="PROSITE-ProRule" id="PRU01100"/>
    </source>
</evidence>
<evidence type="ECO:0000269" key="3">
    <source>
    </source>
</evidence>
<evidence type="ECO:0000269" key="4">
    <source>
    </source>
</evidence>
<evidence type="ECO:0000269" key="5">
    <source>
    </source>
</evidence>
<evidence type="ECO:0000269" key="6">
    <source ref="6"/>
</evidence>
<evidence type="ECO:0000303" key="7">
    <source>
    </source>
</evidence>
<evidence type="ECO:0000303" key="8">
    <source>
    </source>
</evidence>
<evidence type="ECO:0000305" key="9"/>
<evidence type="ECO:0000305" key="10">
    <source>
    </source>
</evidence>
<evidence type="ECO:0007829" key="11">
    <source>
        <dbReference type="PDB" id="2WHK"/>
    </source>
</evidence>
<evidence type="ECO:0007829" key="12">
    <source>
        <dbReference type="PDB" id="3CBW"/>
    </source>
</evidence>
<proteinExistence type="evidence at protein level"/>
<dbReference type="EC" id="3.2.1.78" evidence="5"/>
<dbReference type="EMBL" id="D88802">
    <property type="protein sequence ID" value="BAA19712.1"/>
    <property type="molecule type" value="Genomic_DNA"/>
</dbReference>
<dbReference type="EMBL" id="AL009126">
    <property type="protein sequence ID" value="CAB12407.2"/>
    <property type="molecule type" value="Genomic_DNA"/>
</dbReference>
<dbReference type="PIR" id="H69785">
    <property type="entry name" value="H69785"/>
</dbReference>
<dbReference type="RefSeq" id="NP_388469.2">
    <property type="nucleotide sequence ID" value="NC_000964.3"/>
</dbReference>
<dbReference type="RefSeq" id="WP_003244107.1">
    <property type="nucleotide sequence ID" value="NZ_OZ025638.1"/>
</dbReference>
<dbReference type="PDB" id="2WHK">
    <property type="method" value="X-ray"/>
    <property type="resolution" value="1.70 A"/>
    <property type="chains" value="A=27-362"/>
</dbReference>
<dbReference type="PDB" id="3CBW">
    <property type="method" value="X-ray"/>
    <property type="resolution" value="1.27 A"/>
    <property type="chains" value="A/B=21-362"/>
</dbReference>
<dbReference type="PDBsum" id="2WHK"/>
<dbReference type="PDBsum" id="3CBW"/>
<dbReference type="SMR" id="O05512"/>
<dbReference type="FunCoup" id="O05512">
    <property type="interactions" value="118"/>
</dbReference>
<dbReference type="STRING" id="224308.BSU05880"/>
<dbReference type="CAZy" id="GH26">
    <property type="family name" value="Glycoside Hydrolase Family 26"/>
</dbReference>
<dbReference type="PaxDb" id="224308-BSU05880"/>
<dbReference type="DNASU" id="938034"/>
<dbReference type="EnsemblBacteria" id="CAB12407">
    <property type="protein sequence ID" value="CAB12407"/>
    <property type="gene ID" value="BSU_05880"/>
</dbReference>
<dbReference type="GeneID" id="938034"/>
<dbReference type="KEGG" id="bsu:BSU05880"/>
<dbReference type="PATRIC" id="fig|224308.179.peg.632"/>
<dbReference type="eggNOG" id="COG4124">
    <property type="taxonomic scope" value="Bacteria"/>
</dbReference>
<dbReference type="InParanoid" id="O05512"/>
<dbReference type="OrthoDB" id="185675at2"/>
<dbReference type="BioCyc" id="BSUB:BSU05880-MONOMER"/>
<dbReference type="BRENDA" id="3.2.1.78">
    <property type="organism ID" value="658"/>
</dbReference>
<dbReference type="EvolutionaryTrace" id="O05512"/>
<dbReference type="Proteomes" id="UP000001570">
    <property type="component" value="Chromosome"/>
</dbReference>
<dbReference type="GO" id="GO:0005576">
    <property type="term" value="C:extracellular region"/>
    <property type="evidence" value="ECO:0007669"/>
    <property type="project" value="UniProtKB-SubCell"/>
</dbReference>
<dbReference type="GO" id="GO:0016985">
    <property type="term" value="F:mannan endo-1,4-beta-mannosidase activity"/>
    <property type="evidence" value="ECO:0007669"/>
    <property type="project" value="UniProtKB-EC"/>
</dbReference>
<dbReference type="GO" id="GO:0000272">
    <property type="term" value="P:polysaccharide catabolic process"/>
    <property type="evidence" value="ECO:0007669"/>
    <property type="project" value="UniProtKB-KW"/>
</dbReference>
<dbReference type="GO" id="GO:0006080">
    <property type="term" value="P:substituted mannan metabolic process"/>
    <property type="evidence" value="ECO:0007669"/>
    <property type="project" value="InterPro"/>
</dbReference>
<dbReference type="Gene3D" id="3.20.20.80">
    <property type="entry name" value="Glycosidases"/>
    <property type="match status" value="1"/>
</dbReference>
<dbReference type="InterPro" id="IPR022790">
    <property type="entry name" value="GH26_dom"/>
</dbReference>
<dbReference type="InterPro" id="IPR000805">
    <property type="entry name" value="Glyco_hydro_26"/>
</dbReference>
<dbReference type="InterPro" id="IPR017853">
    <property type="entry name" value="Glycoside_hydrolase_SF"/>
</dbReference>
<dbReference type="InterPro" id="IPR016714">
    <property type="entry name" value="MANB/E"/>
</dbReference>
<dbReference type="PANTHER" id="PTHR40079:SF4">
    <property type="entry name" value="GH26 DOMAIN-CONTAINING PROTEIN-RELATED"/>
    <property type="match status" value="1"/>
</dbReference>
<dbReference type="PANTHER" id="PTHR40079">
    <property type="entry name" value="MANNAN ENDO-1,4-BETA-MANNOSIDASE E-RELATED"/>
    <property type="match status" value="1"/>
</dbReference>
<dbReference type="Pfam" id="PF02156">
    <property type="entry name" value="Glyco_hydro_26"/>
    <property type="match status" value="1"/>
</dbReference>
<dbReference type="PIRSF" id="PIRSF018168">
    <property type="entry name" value="Mannan-1_4-beta-mannosidase"/>
    <property type="match status" value="1"/>
</dbReference>
<dbReference type="PRINTS" id="PR00739">
    <property type="entry name" value="GLHYDRLASE26"/>
</dbReference>
<dbReference type="SUPFAM" id="SSF51445">
    <property type="entry name" value="(Trans)glycosidases"/>
    <property type="match status" value="1"/>
</dbReference>
<dbReference type="PROSITE" id="PS51764">
    <property type="entry name" value="GH26"/>
    <property type="match status" value="1"/>
</dbReference>
<reference key="1">
    <citation type="journal article" date="1997" name="Microbiology">
        <title>Nucleotide sequence and analysis of the phoB-rrnE-groESL region of the Bacillus subtilis chromosome.</title>
        <authorList>
            <person name="Sadaie Y."/>
            <person name="Yata K."/>
            <person name="Fujita M."/>
            <person name="Sagai H."/>
            <person name="Itaya M."/>
            <person name="Kasahara Y."/>
            <person name="Ogasawara N."/>
        </authorList>
    </citation>
    <scope>NUCLEOTIDE SEQUENCE [GENOMIC DNA]</scope>
    <source>
        <strain>168 / JH642</strain>
    </source>
</reference>
<reference key="2">
    <citation type="journal article" date="1997" name="Nature">
        <title>The complete genome sequence of the Gram-positive bacterium Bacillus subtilis.</title>
        <authorList>
            <person name="Kunst F."/>
            <person name="Ogasawara N."/>
            <person name="Moszer I."/>
            <person name="Albertini A.M."/>
            <person name="Alloni G."/>
            <person name="Azevedo V."/>
            <person name="Bertero M.G."/>
            <person name="Bessieres P."/>
            <person name="Bolotin A."/>
            <person name="Borchert S."/>
            <person name="Borriss R."/>
            <person name="Boursier L."/>
            <person name="Brans A."/>
            <person name="Braun M."/>
            <person name="Brignell S.C."/>
            <person name="Bron S."/>
            <person name="Brouillet S."/>
            <person name="Bruschi C.V."/>
            <person name="Caldwell B."/>
            <person name="Capuano V."/>
            <person name="Carter N.M."/>
            <person name="Choi S.-K."/>
            <person name="Codani J.-J."/>
            <person name="Connerton I.F."/>
            <person name="Cummings N.J."/>
            <person name="Daniel R.A."/>
            <person name="Denizot F."/>
            <person name="Devine K.M."/>
            <person name="Duesterhoeft A."/>
            <person name="Ehrlich S.D."/>
            <person name="Emmerson P.T."/>
            <person name="Entian K.-D."/>
            <person name="Errington J."/>
            <person name="Fabret C."/>
            <person name="Ferrari E."/>
            <person name="Foulger D."/>
            <person name="Fritz C."/>
            <person name="Fujita M."/>
            <person name="Fujita Y."/>
            <person name="Fuma S."/>
            <person name="Galizzi A."/>
            <person name="Galleron N."/>
            <person name="Ghim S.-Y."/>
            <person name="Glaser P."/>
            <person name="Goffeau A."/>
            <person name="Golightly E.J."/>
            <person name="Grandi G."/>
            <person name="Guiseppi G."/>
            <person name="Guy B.J."/>
            <person name="Haga K."/>
            <person name="Haiech J."/>
            <person name="Harwood C.R."/>
            <person name="Henaut A."/>
            <person name="Hilbert H."/>
            <person name="Holsappel S."/>
            <person name="Hosono S."/>
            <person name="Hullo M.-F."/>
            <person name="Itaya M."/>
            <person name="Jones L.-M."/>
            <person name="Joris B."/>
            <person name="Karamata D."/>
            <person name="Kasahara Y."/>
            <person name="Klaerr-Blanchard M."/>
            <person name="Klein C."/>
            <person name="Kobayashi Y."/>
            <person name="Koetter P."/>
            <person name="Koningstein G."/>
            <person name="Krogh S."/>
            <person name="Kumano M."/>
            <person name="Kurita K."/>
            <person name="Lapidus A."/>
            <person name="Lardinois S."/>
            <person name="Lauber J."/>
            <person name="Lazarevic V."/>
            <person name="Lee S.-M."/>
            <person name="Levine A."/>
            <person name="Liu H."/>
            <person name="Masuda S."/>
            <person name="Mauel C."/>
            <person name="Medigue C."/>
            <person name="Medina N."/>
            <person name="Mellado R.P."/>
            <person name="Mizuno M."/>
            <person name="Moestl D."/>
            <person name="Nakai S."/>
            <person name="Noback M."/>
            <person name="Noone D."/>
            <person name="O'Reilly M."/>
            <person name="Ogawa K."/>
            <person name="Ogiwara A."/>
            <person name="Oudega B."/>
            <person name="Park S.-H."/>
            <person name="Parro V."/>
            <person name="Pohl T.M."/>
            <person name="Portetelle D."/>
            <person name="Porwollik S."/>
            <person name="Prescott A.M."/>
            <person name="Presecan E."/>
            <person name="Pujic P."/>
            <person name="Purnelle B."/>
            <person name="Rapoport G."/>
            <person name="Rey M."/>
            <person name="Reynolds S."/>
            <person name="Rieger M."/>
            <person name="Rivolta C."/>
            <person name="Rocha E."/>
            <person name="Roche B."/>
            <person name="Rose M."/>
            <person name="Sadaie Y."/>
            <person name="Sato T."/>
            <person name="Scanlan E."/>
            <person name="Schleich S."/>
            <person name="Schroeter R."/>
            <person name="Scoffone F."/>
            <person name="Sekiguchi J."/>
            <person name="Sekowska A."/>
            <person name="Seror S.J."/>
            <person name="Serror P."/>
            <person name="Shin B.-S."/>
            <person name="Soldo B."/>
            <person name="Sorokin A."/>
            <person name="Tacconi E."/>
            <person name="Takagi T."/>
            <person name="Takahashi H."/>
            <person name="Takemaru K."/>
            <person name="Takeuchi M."/>
            <person name="Tamakoshi A."/>
            <person name="Tanaka T."/>
            <person name="Terpstra P."/>
            <person name="Tognoni A."/>
            <person name="Tosato V."/>
            <person name="Uchiyama S."/>
            <person name="Vandenbol M."/>
            <person name="Vannier F."/>
            <person name="Vassarotti A."/>
            <person name="Viari A."/>
            <person name="Wambutt R."/>
            <person name="Wedler E."/>
            <person name="Wedler H."/>
            <person name="Weitzenegger T."/>
            <person name="Winters P."/>
            <person name="Wipat A."/>
            <person name="Yamamoto H."/>
            <person name="Yamane K."/>
            <person name="Yasumoto K."/>
            <person name="Yata K."/>
            <person name="Yoshida K."/>
            <person name="Yoshikawa H.-F."/>
            <person name="Zumstein E."/>
            <person name="Yoshikawa H."/>
            <person name="Danchin A."/>
        </authorList>
    </citation>
    <scope>NUCLEOTIDE SEQUENCE [LARGE SCALE GENOMIC DNA]</scope>
    <source>
        <strain>168</strain>
    </source>
</reference>
<reference key="3">
    <citation type="journal article" date="2009" name="Microbiology">
        <title>From a consortium sequence to a unified sequence: the Bacillus subtilis 168 reference genome a decade later.</title>
        <authorList>
            <person name="Barbe V."/>
            <person name="Cruveiller S."/>
            <person name="Kunst F."/>
            <person name="Lenoble P."/>
            <person name="Meurice G."/>
            <person name="Sekowska A."/>
            <person name="Vallenet D."/>
            <person name="Wang T."/>
            <person name="Moszer I."/>
            <person name="Medigue C."/>
            <person name="Danchin A."/>
        </authorList>
    </citation>
    <scope>SEQUENCE REVISION TO 153; 158 AND 160</scope>
</reference>
<reference key="4">
    <citation type="journal article" date="2000" name="Microbiology">
        <title>Proteome analysis of Bacillus subtilis extracellular proteins: a two-dimensional protein electrophoretic study.</title>
        <authorList>
            <person name="Hirose I."/>
            <person name="Sano K."/>
            <person name="Shioda I."/>
            <person name="Kumano M."/>
            <person name="Nakamura K."/>
            <person name="Yamane K."/>
        </authorList>
    </citation>
    <scope>PROTEIN SEQUENCE OF 27-37</scope>
    <source>
        <strain>168</strain>
    </source>
</reference>
<reference key="5">
    <citation type="journal article" date="2008" name="FEMS Microbiol. Lett.">
        <title>Glucomannan utilization operon of Bacillus subtilis.</title>
        <authorList>
            <person name="Sadaie Y."/>
            <person name="Nakadate H."/>
            <person name="Fukui R."/>
            <person name="Yee L.M."/>
            <person name="Asai K."/>
        </authorList>
    </citation>
    <scope>FUNCTION IN GLUCOMANNAN UTILIZATION</scope>
    <scope>INDUCTION</scope>
    <source>
        <strain>168</strain>
    </source>
</reference>
<reference key="6">
    <citation type="submission" date="2008-02" db="PDB data bank">
        <title>Crystal structure of the YdhT protein from Bacillus subtilis.</title>
        <authorList>
            <person name="Bonanno J.B."/>
            <person name="Rutter M."/>
            <person name="Bain K.T."/>
            <person name="Iizuka M."/>
            <person name="Romero R."/>
            <person name="Smith D."/>
            <person name="Wasserman S."/>
            <person name="Sauder J.M."/>
            <person name="Burley S.K."/>
            <person name="Almo S.C."/>
        </authorList>
    </citation>
    <scope>X-RAY CRYSTALLOGRAPHY (1.27 ANGSTROMS) OF 21-362</scope>
    <scope>SUBUNIT</scope>
</reference>
<reference key="7">
    <citation type="journal article" date="2009" name="Biochemistry">
        <title>Understanding how diverse beta-mannanases recognize heterogeneous substrates.</title>
        <authorList>
            <person name="Tailford L.E."/>
            <person name="Ducros V.M."/>
            <person name="Flint J.E."/>
            <person name="Roberts S.M."/>
            <person name="Morland C."/>
            <person name="Zechel D.L."/>
            <person name="Smith N."/>
            <person name="Bjornvad M.E."/>
            <person name="Borchert T.V."/>
            <person name="Wilson K.S."/>
            <person name="Davies G.J."/>
            <person name="Gilbert H.J."/>
        </authorList>
    </citation>
    <scope>X-RAY CRYSTALLOGRAPHY (1.70 ANGSTROMS) OF 27-362</scope>
    <scope>FUNCTION</scope>
    <scope>CATALYTIC ACTIVITY</scope>
    <scope>BIOPHYSICOCHEMICAL PROPERTIES</scope>
    <scope>SUBSTRATE SPECIFICITY</scope>
</reference>